<accession>Q04TH1</accession>
<feature type="chain" id="PRO_1000003527" description="Small ribosomal subunit protein bS18">
    <location>
        <begin position="1"/>
        <end position="81"/>
    </location>
</feature>
<protein>
    <recommendedName>
        <fullName evidence="1">Small ribosomal subunit protein bS18</fullName>
    </recommendedName>
    <alternativeName>
        <fullName evidence="2">30S ribosomal protein S18</fullName>
    </alternativeName>
</protein>
<name>RS18_LEPBJ</name>
<sequence length="81" mass="9603">MEGKPQRKQNKYKKKVCRFTADPELAKQINYKNIELLERFITNRGKIIPRRITGTSARYQRVLAREIRKARSIGLLPYKVN</sequence>
<keyword id="KW-0687">Ribonucleoprotein</keyword>
<keyword id="KW-0689">Ribosomal protein</keyword>
<keyword id="KW-0694">RNA-binding</keyword>
<keyword id="KW-0699">rRNA-binding</keyword>
<evidence type="ECO:0000255" key="1">
    <source>
        <dbReference type="HAMAP-Rule" id="MF_00270"/>
    </source>
</evidence>
<evidence type="ECO:0000305" key="2"/>
<gene>
    <name evidence="1" type="primary">rpsR</name>
    <name type="ordered locus">LBJ_1195</name>
</gene>
<proteinExistence type="inferred from homology"/>
<organism>
    <name type="scientific">Leptospira borgpetersenii serovar Hardjo-bovis (strain JB197)</name>
    <dbReference type="NCBI Taxonomy" id="355277"/>
    <lineage>
        <taxon>Bacteria</taxon>
        <taxon>Pseudomonadati</taxon>
        <taxon>Spirochaetota</taxon>
        <taxon>Spirochaetia</taxon>
        <taxon>Leptospirales</taxon>
        <taxon>Leptospiraceae</taxon>
        <taxon>Leptospira</taxon>
    </lineage>
</organism>
<reference key="1">
    <citation type="journal article" date="2006" name="Proc. Natl. Acad. Sci. U.S.A.">
        <title>Genome reduction in Leptospira borgpetersenii reflects limited transmission potential.</title>
        <authorList>
            <person name="Bulach D.M."/>
            <person name="Zuerner R.L."/>
            <person name="Wilson P."/>
            <person name="Seemann T."/>
            <person name="McGrath A."/>
            <person name="Cullen P.A."/>
            <person name="Davis J."/>
            <person name="Johnson M."/>
            <person name="Kuczek E."/>
            <person name="Alt D.P."/>
            <person name="Peterson-Burch B."/>
            <person name="Coppel R.L."/>
            <person name="Rood J.I."/>
            <person name="Davies J.K."/>
            <person name="Adler B."/>
        </authorList>
    </citation>
    <scope>NUCLEOTIDE SEQUENCE [LARGE SCALE GENOMIC DNA]</scope>
    <source>
        <strain>JB197</strain>
    </source>
</reference>
<comment type="function">
    <text evidence="1">Binds as a heterodimer with protein bS6 to the central domain of the 16S rRNA, where it helps stabilize the platform of the 30S subunit.</text>
</comment>
<comment type="subunit">
    <text evidence="1">Part of the 30S ribosomal subunit. Forms a tight heterodimer with protein bS6.</text>
</comment>
<comment type="similarity">
    <text evidence="1">Belongs to the bacterial ribosomal protein bS18 family.</text>
</comment>
<dbReference type="EMBL" id="CP000350">
    <property type="protein sequence ID" value="ABJ75799.1"/>
    <property type="molecule type" value="Genomic_DNA"/>
</dbReference>
<dbReference type="SMR" id="Q04TH1"/>
<dbReference type="KEGG" id="lbj:LBJ_1195"/>
<dbReference type="HOGENOM" id="CLU_148710_2_2_12"/>
<dbReference type="Proteomes" id="UP000000656">
    <property type="component" value="Chromosome 1"/>
</dbReference>
<dbReference type="GO" id="GO:0022627">
    <property type="term" value="C:cytosolic small ribosomal subunit"/>
    <property type="evidence" value="ECO:0007669"/>
    <property type="project" value="TreeGrafter"/>
</dbReference>
<dbReference type="GO" id="GO:0070181">
    <property type="term" value="F:small ribosomal subunit rRNA binding"/>
    <property type="evidence" value="ECO:0007669"/>
    <property type="project" value="TreeGrafter"/>
</dbReference>
<dbReference type="GO" id="GO:0003735">
    <property type="term" value="F:structural constituent of ribosome"/>
    <property type="evidence" value="ECO:0007669"/>
    <property type="project" value="InterPro"/>
</dbReference>
<dbReference type="GO" id="GO:0006412">
    <property type="term" value="P:translation"/>
    <property type="evidence" value="ECO:0007669"/>
    <property type="project" value="UniProtKB-UniRule"/>
</dbReference>
<dbReference type="FunFam" id="4.10.640.10:FF:000014">
    <property type="entry name" value="30S ribosomal protein S18"/>
    <property type="match status" value="1"/>
</dbReference>
<dbReference type="Gene3D" id="4.10.640.10">
    <property type="entry name" value="Ribosomal protein S18"/>
    <property type="match status" value="1"/>
</dbReference>
<dbReference type="HAMAP" id="MF_00270">
    <property type="entry name" value="Ribosomal_bS18"/>
    <property type="match status" value="1"/>
</dbReference>
<dbReference type="InterPro" id="IPR001648">
    <property type="entry name" value="Ribosomal_bS18"/>
</dbReference>
<dbReference type="InterPro" id="IPR018275">
    <property type="entry name" value="Ribosomal_bS18_CS"/>
</dbReference>
<dbReference type="InterPro" id="IPR036870">
    <property type="entry name" value="Ribosomal_bS18_sf"/>
</dbReference>
<dbReference type="NCBIfam" id="TIGR00165">
    <property type="entry name" value="S18"/>
    <property type="match status" value="1"/>
</dbReference>
<dbReference type="PANTHER" id="PTHR13479">
    <property type="entry name" value="30S RIBOSOMAL PROTEIN S18"/>
    <property type="match status" value="1"/>
</dbReference>
<dbReference type="PANTHER" id="PTHR13479:SF40">
    <property type="entry name" value="SMALL RIBOSOMAL SUBUNIT PROTEIN BS18M"/>
    <property type="match status" value="1"/>
</dbReference>
<dbReference type="Pfam" id="PF01084">
    <property type="entry name" value="Ribosomal_S18"/>
    <property type="match status" value="1"/>
</dbReference>
<dbReference type="PRINTS" id="PR00974">
    <property type="entry name" value="RIBOSOMALS18"/>
</dbReference>
<dbReference type="SUPFAM" id="SSF46911">
    <property type="entry name" value="Ribosomal protein S18"/>
    <property type="match status" value="1"/>
</dbReference>
<dbReference type="PROSITE" id="PS00057">
    <property type="entry name" value="RIBOSOMAL_S18"/>
    <property type="match status" value="1"/>
</dbReference>